<reference key="1">
    <citation type="journal article" date="2002" name="J. Bacteriol.">
        <title>Whole-genome comparison of Mycobacterium tuberculosis clinical and laboratory strains.</title>
        <authorList>
            <person name="Fleischmann R.D."/>
            <person name="Alland D."/>
            <person name="Eisen J.A."/>
            <person name="Carpenter L."/>
            <person name="White O."/>
            <person name="Peterson J.D."/>
            <person name="DeBoy R.T."/>
            <person name="Dodson R.J."/>
            <person name="Gwinn M.L."/>
            <person name="Haft D.H."/>
            <person name="Hickey E.K."/>
            <person name="Kolonay J.F."/>
            <person name="Nelson W.C."/>
            <person name="Umayam L.A."/>
            <person name="Ermolaeva M.D."/>
            <person name="Salzberg S.L."/>
            <person name="Delcher A."/>
            <person name="Utterback T.R."/>
            <person name="Weidman J.F."/>
            <person name="Khouri H.M."/>
            <person name="Gill J."/>
            <person name="Mikula A."/>
            <person name="Bishai W."/>
            <person name="Jacobs W.R. Jr."/>
            <person name="Venter J.C."/>
            <person name="Fraser C.M."/>
        </authorList>
    </citation>
    <scope>NUCLEOTIDE SEQUENCE [LARGE SCALE GENOMIC DNA]</scope>
    <source>
        <strain>CDC 1551 / Oshkosh</strain>
    </source>
</reference>
<sequence>MRGIILAGGSGTRLYPITMGISKQLLPVYDKPMIYYPLTTLMMAGIRDIQLITTPHDAPGFHRLLGDGAHLGVNISYATQDQPDGLAQAFVIGANHIGADSVALVLGDNIFYGPGLGTSLKRFQSISGGAIFAYWVANPSAYGVVEFGAEGMALSLEEKPVTPKSNYAVPGLYFYDNDVIEIARGLKKSARGEYEITEVNQVYLNQGRLAVEVLARGTAWLDTGTFDSLLDAADFVRTLERRQGLKVSIPEEVAWRMGWIDDEQLVQRARALVKSGYGNYLLELLERN</sequence>
<name>RMLA_MYCTO</name>
<dbReference type="EC" id="2.7.7.24" evidence="1"/>
<dbReference type="EMBL" id="AE000516">
    <property type="protein sequence ID" value="AAK44571.1"/>
    <property type="molecule type" value="Genomic_DNA"/>
</dbReference>
<dbReference type="PIR" id="G70527">
    <property type="entry name" value="G70527"/>
</dbReference>
<dbReference type="RefSeq" id="WP_003401670.1">
    <property type="nucleotide sequence ID" value="NZ_KK341227.1"/>
</dbReference>
<dbReference type="SMR" id="P9WH12"/>
<dbReference type="GeneID" id="45424301"/>
<dbReference type="KEGG" id="mtc:MT0348"/>
<dbReference type="PATRIC" id="fig|83331.31.peg.369"/>
<dbReference type="HOGENOM" id="CLU_029499_9_0_11"/>
<dbReference type="UniPathway" id="UPA00124"/>
<dbReference type="Proteomes" id="UP000001020">
    <property type="component" value="Chromosome"/>
</dbReference>
<dbReference type="GO" id="GO:0008879">
    <property type="term" value="F:glucose-1-phosphate thymidylyltransferase activity"/>
    <property type="evidence" value="ECO:0007669"/>
    <property type="project" value="UniProtKB-EC"/>
</dbReference>
<dbReference type="GO" id="GO:0046872">
    <property type="term" value="F:metal ion binding"/>
    <property type="evidence" value="ECO:0007669"/>
    <property type="project" value="UniProtKB-KW"/>
</dbReference>
<dbReference type="GO" id="GO:0019305">
    <property type="term" value="P:dTDP-rhamnose biosynthetic process"/>
    <property type="evidence" value="ECO:0007669"/>
    <property type="project" value="UniProtKB-UniPathway"/>
</dbReference>
<dbReference type="CDD" id="cd02538">
    <property type="entry name" value="G1P_TT_short"/>
    <property type="match status" value="1"/>
</dbReference>
<dbReference type="FunFam" id="3.90.550.10:FF:000023">
    <property type="entry name" value="Glucose-1-phosphate thymidylyltransferase"/>
    <property type="match status" value="1"/>
</dbReference>
<dbReference type="Gene3D" id="3.90.550.10">
    <property type="entry name" value="Spore Coat Polysaccharide Biosynthesis Protein SpsA, Chain A"/>
    <property type="match status" value="1"/>
</dbReference>
<dbReference type="InterPro" id="IPR005907">
    <property type="entry name" value="G1P_thy_trans_s"/>
</dbReference>
<dbReference type="InterPro" id="IPR005835">
    <property type="entry name" value="NTP_transferase_dom"/>
</dbReference>
<dbReference type="InterPro" id="IPR029044">
    <property type="entry name" value="Nucleotide-diphossugar_trans"/>
</dbReference>
<dbReference type="NCBIfam" id="TIGR01207">
    <property type="entry name" value="rmlA"/>
    <property type="match status" value="1"/>
</dbReference>
<dbReference type="PANTHER" id="PTHR43532">
    <property type="entry name" value="GLUCOSE-1-PHOSPHATE THYMIDYLYLTRANSFERASE"/>
    <property type="match status" value="1"/>
</dbReference>
<dbReference type="PANTHER" id="PTHR43532:SF1">
    <property type="entry name" value="GLUCOSE-1-PHOSPHATE THYMIDYLYLTRANSFERASE 1"/>
    <property type="match status" value="1"/>
</dbReference>
<dbReference type="Pfam" id="PF00483">
    <property type="entry name" value="NTP_transferase"/>
    <property type="match status" value="1"/>
</dbReference>
<dbReference type="SUPFAM" id="SSF53448">
    <property type="entry name" value="Nucleotide-diphospho-sugar transferases"/>
    <property type="match status" value="1"/>
</dbReference>
<accession>P9WH12</accession>
<accession>L0T524</accession>
<accession>P72017</accession>
<accession>Q797X3</accession>
<accession>Q7DA01</accession>
<gene>
    <name type="primary">rmlA</name>
    <name type="synonym">rfbA</name>
    <name type="ordered locus">MT0348</name>
</gene>
<protein>
    <recommendedName>
        <fullName evidence="1">Glucose-1-phosphate thymidylyltransferase</fullName>
        <ecNumber evidence="1">2.7.7.24</ecNumber>
    </recommendedName>
    <alternativeName>
        <fullName evidence="1">dTDP-glucose pyrophosphorylase</fullName>
    </alternativeName>
    <alternativeName>
        <fullName evidence="1">dTDP-glucose synthase</fullName>
    </alternativeName>
</protein>
<feature type="chain" id="PRO_0000428267" description="Glucose-1-phosphate thymidylyltransferase">
    <location>
        <begin position="1"/>
        <end position="288"/>
    </location>
</feature>
<feature type="binding site" evidence="1">
    <location>
        <position position="8"/>
    </location>
    <ligand>
        <name>dTDP-alpha-D-glucose</name>
        <dbReference type="ChEBI" id="CHEBI:57477"/>
    </ligand>
</feature>
<feature type="binding site" evidence="1">
    <location>
        <position position="8"/>
    </location>
    <ligand>
        <name>dTTP</name>
        <dbReference type="ChEBI" id="CHEBI:37568"/>
    </ligand>
</feature>
<feature type="binding site" evidence="1">
    <location>
        <position position="11"/>
    </location>
    <ligand>
        <name>dTTP</name>
        <dbReference type="ChEBI" id="CHEBI:37568"/>
    </ligand>
</feature>
<feature type="binding site" evidence="1">
    <location>
        <position position="12"/>
    </location>
    <ligand>
        <name>dTTP</name>
        <dbReference type="ChEBI" id="CHEBI:37568"/>
    </ligand>
</feature>
<feature type="binding site" evidence="1">
    <location>
        <position position="13"/>
    </location>
    <ligand>
        <name>dTTP</name>
        <dbReference type="ChEBI" id="CHEBI:37568"/>
    </ligand>
</feature>
<feature type="binding site" evidence="1">
    <location>
        <position position="23"/>
    </location>
    <ligand>
        <name>dTDP-alpha-D-glucose</name>
        <dbReference type="ChEBI" id="CHEBI:57477"/>
    </ligand>
</feature>
<feature type="binding site" evidence="1">
    <location>
        <position position="23"/>
    </location>
    <ligand>
        <name>dTTP</name>
        <dbReference type="ChEBI" id="CHEBI:37568"/>
    </ligand>
</feature>
<feature type="binding site" evidence="1">
    <location>
        <position position="24"/>
    </location>
    <ligand>
        <name>dTDP-alpha-D-glucose</name>
        <dbReference type="ChEBI" id="CHEBI:57477"/>
    </ligand>
</feature>
<feature type="binding site" evidence="1">
    <location>
        <position position="24"/>
    </location>
    <ligand>
        <name>dTTP</name>
        <dbReference type="ChEBI" id="CHEBI:37568"/>
    </ligand>
</feature>
<feature type="binding site" evidence="1">
    <location>
        <position position="80"/>
    </location>
    <ligand>
        <name>dTDP-alpha-D-glucose</name>
        <dbReference type="ChEBI" id="CHEBI:57477"/>
    </ligand>
</feature>
<feature type="binding site" evidence="1">
    <location>
        <position position="80"/>
    </location>
    <ligand>
        <name>dTTP</name>
        <dbReference type="ChEBI" id="CHEBI:37568"/>
    </ligand>
</feature>
<feature type="binding site" evidence="1">
    <location>
        <position position="85"/>
    </location>
    <ligand>
        <name>dTDP-alpha-D-glucose</name>
        <dbReference type="ChEBI" id="CHEBI:57477"/>
    </ligand>
</feature>
<feature type="binding site" evidence="1">
    <location>
        <position position="85"/>
    </location>
    <ligand>
        <name>dTTP</name>
        <dbReference type="ChEBI" id="CHEBI:37568"/>
    </ligand>
</feature>
<feature type="binding site" evidence="1">
    <location>
        <position position="108"/>
    </location>
    <ligand>
        <name>dTDP-alpha-D-glucose</name>
        <dbReference type="ChEBI" id="CHEBI:57477"/>
    </ligand>
</feature>
<feature type="binding site" evidence="1">
    <location>
        <position position="108"/>
    </location>
    <ligand>
        <name>dTTP</name>
        <dbReference type="ChEBI" id="CHEBI:37568"/>
    </ligand>
</feature>
<feature type="binding site" evidence="1">
    <location>
        <position position="108"/>
    </location>
    <ligand>
        <name>Mg(2+)</name>
        <dbReference type="ChEBI" id="CHEBI:18420"/>
    </ligand>
</feature>
<feature type="binding site" evidence="1">
    <location>
        <position position="109"/>
    </location>
    <ligand>
        <name>dTDP-alpha-D-glucose</name>
        <dbReference type="ChEBI" id="CHEBI:57477"/>
    </ligand>
</feature>
<feature type="binding site" evidence="1">
    <location>
        <position position="143"/>
    </location>
    <ligand>
        <name>dTDP-alpha-D-glucose</name>
        <dbReference type="ChEBI" id="CHEBI:57477"/>
    </ligand>
</feature>
<feature type="binding site" evidence="1">
    <location>
        <position position="158"/>
    </location>
    <ligand>
        <name>dTDP-alpha-D-glucose</name>
        <dbReference type="ChEBI" id="CHEBI:57477"/>
    </ligand>
</feature>
<feature type="binding site" evidence="1">
    <location>
        <position position="159"/>
    </location>
    <ligand>
        <name>dTDP-alpha-D-glucose</name>
        <dbReference type="ChEBI" id="CHEBI:57477"/>
    </ligand>
</feature>
<feature type="binding site" evidence="1">
    <location>
        <position position="169"/>
    </location>
    <ligand>
        <name>dTDP-alpha-D-glucose</name>
        <dbReference type="ChEBI" id="CHEBI:57477"/>
    </ligand>
</feature>
<feature type="binding site" evidence="1">
    <location>
        <position position="222"/>
    </location>
    <ligand>
        <name>dTDP-alpha-D-glucose</name>
        <dbReference type="ChEBI" id="CHEBI:57477"/>
    </ligand>
</feature>
<feature type="binding site" evidence="1">
    <location>
        <position position="222"/>
    </location>
    <ligand>
        <name>Mg(2+)</name>
        <dbReference type="ChEBI" id="CHEBI:18420"/>
    </ligand>
</feature>
<keyword id="KW-0460">Magnesium</keyword>
<keyword id="KW-0479">Metal-binding</keyword>
<keyword id="KW-0548">Nucleotidyltransferase</keyword>
<keyword id="KW-1185">Reference proteome</keyword>
<keyword id="KW-0808">Transferase</keyword>
<comment type="function">
    <text evidence="1">Catalyzes the conversion of glucose-1-phosphate and dTTP to dTDP-glucose and pyrophosphate. Involved in the biosynthesis of the dTDP-L-rhamnose which is a component of the critical linker, D-N-acetylglucosamine-L-rhamnose disaccharide, which connects the galactan region of arabinogalactan to peptidoglycan via a phosphodiester linkage.</text>
</comment>
<comment type="catalytic activity">
    <reaction evidence="1">
        <text>dTTP + alpha-D-glucose 1-phosphate + H(+) = dTDP-alpha-D-glucose + diphosphate</text>
        <dbReference type="Rhea" id="RHEA:15225"/>
        <dbReference type="ChEBI" id="CHEBI:15378"/>
        <dbReference type="ChEBI" id="CHEBI:33019"/>
        <dbReference type="ChEBI" id="CHEBI:37568"/>
        <dbReference type="ChEBI" id="CHEBI:57477"/>
        <dbReference type="ChEBI" id="CHEBI:58601"/>
        <dbReference type="EC" id="2.7.7.24"/>
    </reaction>
</comment>
<comment type="cofactor">
    <cofactor evidence="1">
        <name>Mg(2+)</name>
        <dbReference type="ChEBI" id="CHEBI:18420"/>
    </cofactor>
    <text evidence="1">Binds 1 Mg(2+) ion per subunit.</text>
</comment>
<comment type="pathway">
    <text evidence="1">Carbohydrate biosynthesis; dTDP-L-rhamnose biosynthesis.</text>
</comment>
<comment type="similarity">
    <text evidence="2">Belongs to the glucose-1-phosphate thymidylyltransferase family.</text>
</comment>
<evidence type="ECO:0000250" key="1">
    <source>
        <dbReference type="UniProtKB" id="P9WH13"/>
    </source>
</evidence>
<evidence type="ECO:0000305" key="2"/>
<proteinExistence type="inferred from homology"/>
<organism>
    <name type="scientific">Mycobacterium tuberculosis (strain CDC 1551 / Oshkosh)</name>
    <dbReference type="NCBI Taxonomy" id="83331"/>
    <lineage>
        <taxon>Bacteria</taxon>
        <taxon>Bacillati</taxon>
        <taxon>Actinomycetota</taxon>
        <taxon>Actinomycetes</taxon>
        <taxon>Mycobacteriales</taxon>
        <taxon>Mycobacteriaceae</taxon>
        <taxon>Mycobacterium</taxon>
        <taxon>Mycobacterium tuberculosis complex</taxon>
    </lineage>
</organism>